<sequence length="550" mass="60425">MATPQQPLLTKTHKQNSIISFKILTFVVTLFVALFLVVFLVAPYQFEIKHSNLCKTAQDSQLCLSYVSDLMSNEIVTTDSDGLSILMKFLVNYVHQMNNAIPVVSKMKNQINDIRQEGALTDCLELLDQSVDLVSDSIAAIDKRTHSEHANAQSWLSGVLTNHVTCLDELDSFTKAMINGTNLDELISRAKVALAMLASVTTPNDDVLRPGLGKMPSWVSSRDRKLMESSGKDIGANAVVAKDGTGKYRTLAEAVAAAPDKSKTRYVIYVKRGIYKENVEVSSRKMKLMIVGDGMHATIITGNLNVVDGSTTFHSATLAAVGKGFILQDICIQNTAGPAKHQAVALRVGADKSVINRCRIDAYQDTLYAHSQRQFYRDSYVTGTIDFIFGNAAVVFQKCKLVARKPGKYQQNMVTAQGRTDPNQATGTSIQFCNIIASSDLEPVLKEFPTYLGRPWKKYSRTVVMESYLGGLINPAGWAEWDGDFALKTLYYGEFMNNGPGAGTSKRVKWPGYHCITDPAEAMPFTVAKLIQGGSWLRSTGVAYVDGLYD</sequence>
<name>PME22_SOLLC</name>
<protein>
    <recommendedName>
        <fullName>Pectinesterase 2.2</fullName>
        <shortName>PE 2.2</shortName>
        <ecNumber>3.1.1.11</ecNumber>
    </recommendedName>
    <alternativeName>
        <fullName>Pectin methylesterase 2.2</fullName>
    </alternativeName>
</protein>
<keyword id="KW-0063">Aspartyl esterase</keyword>
<keyword id="KW-0134">Cell wall</keyword>
<keyword id="KW-0961">Cell wall biogenesis/degradation</keyword>
<keyword id="KW-1015">Disulfide bond</keyword>
<keyword id="KW-0292">Fruit ripening</keyword>
<keyword id="KW-0325">Glycoprotein</keyword>
<keyword id="KW-0378">Hydrolase</keyword>
<keyword id="KW-1185">Reference proteome</keyword>
<keyword id="KW-0964">Secreted</keyword>
<keyword id="KW-0732">Signal</keyword>
<keyword id="KW-0865">Zymogen</keyword>
<proteinExistence type="inferred from homology"/>
<dbReference type="EC" id="3.1.1.11"/>
<dbReference type="EMBL" id="U70675">
    <property type="protein sequence ID" value="AAB38792.1"/>
    <property type="molecule type" value="Genomic_DNA"/>
</dbReference>
<dbReference type="SMR" id="Q96575"/>
<dbReference type="GlyCosmos" id="Q96575">
    <property type="glycosylation" value="1 site, No reported glycans"/>
</dbReference>
<dbReference type="InParanoid" id="Q96575"/>
<dbReference type="UniPathway" id="UPA00545">
    <property type="reaction ID" value="UER00823"/>
</dbReference>
<dbReference type="Proteomes" id="UP000004994">
    <property type="component" value="Unplaced"/>
</dbReference>
<dbReference type="ExpressionAtlas" id="Q96575">
    <property type="expression patterns" value="baseline and differential"/>
</dbReference>
<dbReference type="GO" id="GO:0005576">
    <property type="term" value="C:extracellular region"/>
    <property type="evidence" value="ECO:0007669"/>
    <property type="project" value="UniProtKB-KW"/>
</dbReference>
<dbReference type="GO" id="GO:0030599">
    <property type="term" value="F:pectinesterase activity"/>
    <property type="evidence" value="ECO:0000318"/>
    <property type="project" value="GO_Central"/>
</dbReference>
<dbReference type="GO" id="GO:0046910">
    <property type="term" value="F:pectinesterase inhibitor activity"/>
    <property type="evidence" value="ECO:0000318"/>
    <property type="project" value="GO_Central"/>
</dbReference>
<dbReference type="GO" id="GO:0042545">
    <property type="term" value="P:cell wall modification"/>
    <property type="evidence" value="ECO:0007669"/>
    <property type="project" value="InterPro"/>
</dbReference>
<dbReference type="GO" id="GO:0009835">
    <property type="term" value="P:fruit ripening"/>
    <property type="evidence" value="ECO:0007669"/>
    <property type="project" value="UniProtKB-KW"/>
</dbReference>
<dbReference type="GO" id="GO:0045490">
    <property type="term" value="P:pectin catabolic process"/>
    <property type="evidence" value="ECO:0007669"/>
    <property type="project" value="UniProtKB-UniPathway"/>
</dbReference>
<dbReference type="CDD" id="cd15799">
    <property type="entry name" value="PMEI-like_4"/>
    <property type="match status" value="1"/>
</dbReference>
<dbReference type="FunFam" id="2.160.20.10:FF:000001">
    <property type="entry name" value="Pectinesterase"/>
    <property type="match status" value="1"/>
</dbReference>
<dbReference type="FunFam" id="1.20.140.40:FF:000015">
    <property type="entry name" value="Pectinesterase 3"/>
    <property type="match status" value="1"/>
</dbReference>
<dbReference type="Gene3D" id="1.20.140.40">
    <property type="entry name" value="Invertase/pectin methylesterase inhibitor family protein"/>
    <property type="match status" value="1"/>
</dbReference>
<dbReference type="Gene3D" id="2.160.20.10">
    <property type="entry name" value="Single-stranded right-handed beta-helix, Pectin lyase-like"/>
    <property type="match status" value="1"/>
</dbReference>
<dbReference type="InterPro" id="IPR035513">
    <property type="entry name" value="Invertase/methylesterase_inhib"/>
</dbReference>
<dbReference type="InterPro" id="IPR012334">
    <property type="entry name" value="Pectin_lyas_fold"/>
</dbReference>
<dbReference type="InterPro" id="IPR011050">
    <property type="entry name" value="Pectin_lyase_fold/virulence"/>
</dbReference>
<dbReference type="InterPro" id="IPR033131">
    <property type="entry name" value="Pectinesterase_Asp_AS"/>
</dbReference>
<dbReference type="InterPro" id="IPR000070">
    <property type="entry name" value="Pectinesterase_cat"/>
</dbReference>
<dbReference type="InterPro" id="IPR006501">
    <property type="entry name" value="Pectinesterase_inhib_dom"/>
</dbReference>
<dbReference type="InterPro" id="IPR018040">
    <property type="entry name" value="Pectinesterase_Tyr_AS"/>
</dbReference>
<dbReference type="NCBIfam" id="TIGR01614">
    <property type="entry name" value="PME_inhib"/>
    <property type="match status" value="1"/>
</dbReference>
<dbReference type="PANTHER" id="PTHR31707">
    <property type="entry name" value="PECTINESTERASE"/>
    <property type="match status" value="1"/>
</dbReference>
<dbReference type="Pfam" id="PF01095">
    <property type="entry name" value="Pectinesterase"/>
    <property type="match status" value="1"/>
</dbReference>
<dbReference type="Pfam" id="PF04043">
    <property type="entry name" value="PMEI"/>
    <property type="match status" value="1"/>
</dbReference>
<dbReference type="SMART" id="SM00856">
    <property type="entry name" value="PMEI"/>
    <property type="match status" value="1"/>
</dbReference>
<dbReference type="SUPFAM" id="SSF51126">
    <property type="entry name" value="Pectin lyase-like"/>
    <property type="match status" value="1"/>
</dbReference>
<dbReference type="SUPFAM" id="SSF101148">
    <property type="entry name" value="Plant invertase/pectin methylesterase inhibitor"/>
    <property type="match status" value="1"/>
</dbReference>
<dbReference type="PROSITE" id="PS00800">
    <property type="entry name" value="PECTINESTERASE_1"/>
    <property type="match status" value="1"/>
</dbReference>
<dbReference type="PROSITE" id="PS00503">
    <property type="entry name" value="PECTINESTERASE_2"/>
    <property type="match status" value="1"/>
</dbReference>
<gene>
    <name type="primary">PME2.2</name>
</gene>
<comment type="function">
    <text>Pectinesterase may play a role in cell wall metabolism during fruit growth and development prior to ripening and may be required for preparing cell walls for softening by polygalacturonase during fruit ripening.</text>
</comment>
<comment type="catalytic activity">
    <reaction>
        <text>[(1-&gt;4)-alpha-D-galacturonosyl methyl ester](n) + n H2O = [(1-&gt;4)-alpha-D-galacturonosyl](n) + n methanol + n H(+)</text>
        <dbReference type="Rhea" id="RHEA:22380"/>
        <dbReference type="Rhea" id="RHEA-COMP:14570"/>
        <dbReference type="Rhea" id="RHEA-COMP:14573"/>
        <dbReference type="ChEBI" id="CHEBI:15377"/>
        <dbReference type="ChEBI" id="CHEBI:15378"/>
        <dbReference type="ChEBI" id="CHEBI:17790"/>
        <dbReference type="ChEBI" id="CHEBI:140522"/>
        <dbReference type="ChEBI" id="CHEBI:140523"/>
        <dbReference type="EC" id="3.1.1.11"/>
    </reaction>
</comment>
<comment type="pathway">
    <text>Glycan metabolism; pectin degradation; 2-dehydro-3-deoxy-D-gluconate from pectin: step 1/5.</text>
</comment>
<comment type="subcellular location">
    <subcellularLocation>
        <location>Secreted</location>
        <location>Cell wall</location>
    </subcellularLocation>
</comment>
<comment type="miscellaneous">
    <text>The PMEI region may act as an autoinhibitory domain and prevent untimely PME activity during transport.</text>
</comment>
<comment type="similarity">
    <text evidence="4">In the N-terminal section; belongs to the PMEI family.</text>
</comment>
<comment type="similarity">
    <text evidence="4">In the C-terminal section; belongs to the pectinesterase family.</text>
</comment>
<reference key="1">
    <citation type="submission" date="1996-10" db="EMBL/GenBank/DDBJ databases">
        <title>Fruit-specific pectin methylesterase genomic DNA from Lycopersicon esculentum var. VFNT Cherry.</title>
        <authorList>
            <person name="Turner L.A."/>
            <person name="Harriman R.W."/>
            <person name="Handa A.K."/>
        </authorList>
    </citation>
    <scope>NUCLEOTIDE SEQUENCE [GENOMIC DNA]</scope>
    <source>
        <strain>cv. VFNT Cherry</strain>
    </source>
</reference>
<organism>
    <name type="scientific">Solanum lycopersicum</name>
    <name type="common">Tomato</name>
    <name type="synonym">Lycopersicon esculentum</name>
    <dbReference type="NCBI Taxonomy" id="4081"/>
    <lineage>
        <taxon>Eukaryota</taxon>
        <taxon>Viridiplantae</taxon>
        <taxon>Streptophyta</taxon>
        <taxon>Embryophyta</taxon>
        <taxon>Tracheophyta</taxon>
        <taxon>Spermatophyta</taxon>
        <taxon>Magnoliopsida</taxon>
        <taxon>eudicotyledons</taxon>
        <taxon>Gunneridae</taxon>
        <taxon>Pentapetalae</taxon>
        <taxon>asterids</taxon>
        <taxon>lamiids</taxon>
        <taxon>Solanales</taxon>
        <taxon>Solanaceae</taxon>
        <taxon>Solanoideae</taxon>
        <taxon>Solaneae</taxon>
        <taxon>Solanum</taxon>
        <taxon>Solanum subgen. Lycopersicon</taxon>
    </lineage>
</organism>
<evidence type="ECO:0000250" key="1"/>
<evidence type="ECO:0000255" key="2"/>
<evidence type="ECO:0000255" key="3">
    <source>
        <dbReference type="PROSITE-ProRule" id="PRU10040"/>
    </source>
</evidence>
<evidence type="ECO:0000305" key="4"/>
<accession>Q96575</accession>
<feature type="signal peptide" evidence="2">
    <location>
        <begin position="1"/>
        <end status="unknown"/>
    </location>
</feature>
<feature type="propeptide" id="PRO_0000023490" evidence="2">
    <location>
        <begin status="unknown"/>
        <end position="233"/>
    </location>
</feature>
<feature type="chain" id="PRO_0000023491" description="Pectinesterase 2.2">
    <location>
        <begin position="234"/>
        <end position="550"/>
    </location>
</feature>
<feature type="active site" description="Proton donor" evidence="3">
    <location>
        <position position="365"/>
    </location>
</feature>
<feature type="active site" description="Nucleophile" evidence="3">
    <location>
        <position position="386"/>
    </location>
</feature>
<feature type="binding site" evidence="1">
    <location>
        <position position="312"/>
    </location>
    <ligand>
        <name>substrate</name>
    </ligand>
</feature>
<feature type="binding site" evidence="1">
    <location>
        <position position="342"/>
    </location>
    <ligand>
        <name>substrate</name>
    </ligand>
</feature>
<feature type="binding site" evidence="1">
    <location>
        <position position="454"/>
    </location>
    <ligand>
        <name>substrate</name>
    </ligand>
</feature>
<feature type="binding site" evidence="1">
    <location>
        <position position="456"/>
    </location>
    <ligand>
        <name>substrate</name>
    </ligand>
</feature>
<feature type="site" description="Transition state stabilizer" evidence="1">
    <location>
        <position position="364"/>
    </location>
</feature>
<feature type="glycosylation site" description="N-linked (GlcNAc...) asparagine" evidence="2">
    <location>
        <position position="179"/>
    </location>
</feature>
<feature type="disulfide bond" evidence="1">
    <location>
        <begin position="331"/>
        <end position="358"/>
    </location>
</feature>
<feature type="disulfide bond" evidence="1">
    <location>
        <begin position="399"/>
        <end position="433"/>
    </location>
</feature>